<name>GLMS_SPHYA</name>
<keyword id="KW-0032">Aminotransferase</keyword>
<keyword id="KW-0963">Cytoplasm</keyword>
<keyword id="KW-0315">Glutamine amidotransferase</keyword>
<keyword id="KW-0808">Transferase</keyword>
<organism>
    <name type="scientific">Sphingobium yanoikuyae</name>
    <name type="common">Sphingomonas yanoikuyae</name>
    <dbReference type="NCBI Taxonomy" id="13690"/>
    <lineage>
        <taxon>Bacteria</taxon>
        <taxon>Pseudomonadati</taxon>
        <taxon>Pseudomonadota</taxon>
        <taxon>Alphaproteobacteria</taxon>
        <taxon>Sphingomonadales</taxon>
        <taxon>Sphingomonadaceae</taxon>
        <taxon>Sphingobium</taxon>
    </lineage>
</organism>
<accession>Q56206</accession>
<feature type="chain" id="PRO_0000135378" description="Glutamine--fructose-6-phosphate aminotransferase [isomerizing]">
    <location>
        <begin position="1" status="less than"/>
        <end position="156"/>
    </location>
</feature>
<feature type="domain" description="SIS" evidence="2">
    <location>
        <begin position="4"/>
        <end position="146"/>
    </location>
</feature>
<feature type="active site" description="For Fru-6P isomerization activity" evidence="1">
    <location>
        <position position="151"/>
    </location>
</feature>
<feature type="non-terminal residue">
    <location>
        <position position="1"/>
    </location>
</feature>
<sequence>IEAMAHHIVPARDVLYLGRGTDYPLALEGALKLKEISYIHAEGYAAGEMKHGPIALIDELVPVICIAPSGPLFEKTVSNMQEVQARGGKVVLISAYDGVQAAGEGCLATITMPKVHPLIAPMVYAVPVQLLAYHVAVLKGTDVDQPRNLAKSVTVE</sequence>
<reference key="1">
    <citation type="journal article" date="1996" name="Gene">
        <title>Sequence and expression of an isocitrate dehydrogenase-encoding gene from a polycyclic aromatic hydrocarbon oxidizer, Sphingomonas yanoikuyae B1.</title>
        <authorList>
            <person name="Wang Y."/>
            <person name="Lau P.C.K."/>
        </authorList>
    </citation>
    <scope>NUCLEOTIDE SEQUENCE [GENOMIC DNA]</scope>
    <source>
        <strain>DSM 6900 / JCM 10274 / B1</strain>
    </source>
</reference>
<protein>
    <recommendedName>
        <fullName>Glutamine--fructose-6-phosphate aminotransferase [isomerizing]</fullName>
        <ecNumber>2.6.1.16</ecNumber>
    </recommendedName>
    <alternativeName>
        <fullName>D-fructose-6-phosphate amidotransferase</fullName>
    </alternativeName>
    <alternativeName>
        <fullName>GFAT</fullName>
    </alternativeName>
    <alternativeName>
        <fullName>Glucosamine-6-phosphate synthase</fullName>
    </alternativeName>
    <alternativeName>
        <fullName>Hexosephosphate aminotransferase</fullName>
    </alternativeName>
    <alternativeName>
        <fullName>L-glutamine--D-fructose-6-phosphate amidotransferase</fullName>
    </alternativeName>
</protein>
<comment type="function">
    <text evidence="1">Catalyzes the first step in hexosamine metabolism, converting fructose-6P into glucosamine-6P using glutamine as a nitrogen source.</text>
</comment>
<comment type="catalytic activity">
    <reaction>
        <text>D-fructose 6-phosphate + L-glutamine = D-glucosamine 6-phosphate + L-glutamate</text>
        <dbReference type="Rhea" id="RHEA:13237"/>
        <dbReference type="ChEBI" id="CHEBI:29985"/>
        <dbReference type="ChEBI" id="CHEBI:58359"/>
        <dbReference type="ChEBI" id="CHEBI:58725"/>
        <dbReference type="ChEBI" id="CHEBI:61527"/>
        <dbReference type="EC" id="2.6.1.16"/>
    </reaction>
</comment>
<comment type="subunit">
    <text evidence="1">Homodimer.</text>
</comment>
<comment type="subcellular location">
    <subcellularLocation>
        <location evidence="1">Cytoplasm</location>
    </subcellularLocation>
</comment>
<dbReference type="EC" id="2.6.1.16"/>
<dbReference type="EMBL" id="U37523">
    <property type="protein sequence ID" value="AAC43642.1"/>
    <property type="molecule type" value="Genomic_DNA"/>
</dbReference>
<dbReference type="PIR" id="PC4141">
    <property type="entry name" value="PC4141"/>
</dbReference>
<dbReference type="SMR" id="Q56206"/>
<dbReference type="STRING" id="13690.AX777_13135"/>
<dbReference type="eggNOG" id="COG0449">
    <property type="taxonomic scope" value="Bacteria"/>
</dbReference>
<dbReference type="GO" id="GO:0005829">
    <property type="term" value="C:cytosol"/>
    <property type="evidence" value="ECO:0007669"/>
    <property type="project" value="TreeGrafter"/>
</dbReference>
<dbReference type="GO" id="GO:0097367">
    <property type="term" value="F:carbohydrate derivative binding"/>
    <property type="evidence" value="ECO:0007669"/>
    <property type="project" value="InterPro"/>
</dbReference>
<dbReference type="GO" id="GO:0004360">
    <property type="term" value="F:glutamine-fructose-6-phosphate transaminase (isomerizing) activity"/>
    <property type="evidence" value="ECO:0007669"/>
    <property type="project" value="UniProtKB-EC"/>
</dbReference>
<dbReference type="GO" id="GO:0006002">
    <property type="term" value="P:fructose 6-phosphate metabolic process"/>
    <property type="evidence" value="ECO:0007669"/>
    <property type="project" value="TreeGrafter"/>
</dbReference>
<dbReference type="GO" id="GO:0006487">
    <property type="term" value="P:protein N-linked glycosylation"/>
    <property type="evidence" value="ECO:0007669"/>
    <property type="project" value="TreeGrafter"/>
</dbReference>
<dbReference type="GO" id="GO:0006047">
    <property type="term" value="P:UDP-N-acetylglucosamine metabolic process"/>
    <property type="evidence" value="ECO:0007669"/>
    <property type="project" value="TreeGrafter"/>
</dbReference>
<dbReference type="CDD" id="cd05009">
    <property type="entry name" value="SIS_GlmS_GlmD_2"/>
    <property type="match status" value="1"/>
</dbReference>
<dbReference type="FunFam" id="3.40.50.10490:FF:000002">
    <property type="entry name" value="Glutamine--fructose-6-phosphate aminotransferase [isomerizing]"/>
    <property type="match status" value="1"/>
</dbReference>
<dbReference type="Gene3D" id="3.40.50.10490">
    <property type="entry name" value="Glucose-6-phosphate isomerase like protein, domain 1"/>
    <property type="match status" value="2"/>
</dbReference>
<dbReference type="InterPro" id="IPR035490">
    <property type="entry name" value="GlmS/FrlB_SIS"/>
</dbReference>
<dbReference type="InterPro" id="IPR001347">
    <property type="entry name" value="SIS_dom"/>
</dbReference>
<dbReference type="InterPro" id="IPR046348">
    <property type="entry name" value="SIS_dom_sf"/>
</dbReference>
<dbReference type="PANTHER" id="PTHR10937">
    <property type="entry name" value="GLUCOSAMINE--FRUCTOSE-6-PHOSPHATE AMINOTRANSFERASE, ISOMERIZING"/>
    <property type="match status" value="1"/>
</dbReference>
<dbReference type="PANTHER" id="PTHR10937:SF0">
    <property type="entry name" value="GLUTAMINE--FRUCTOSE-6-PHOSPHATE TRANSAMINASE (ISOMERIZING)"/>
    <property type="match status" value="1"/>
</dbReference>
<dbReference type="Pfam" id="PF01380">
    <property type="entry name" value="SIS"/>
    <property type="match status" value="1"/>
</dbReference>
<dbReference type="SUPFAM" id="SSF53697">
    <property type="entry name" value="SIS domain"/>
    <property type="match status" value="1"/>
</dbReference>
<dbReference type="PROSITE" id="PS51464">
    <property type="entry name" value="SIS"/>
    <property type="match status" value="1"/>
</dbReference>
<evidence type="ECO:0000250" key="1"/>
<evidence type="ECO:0000255" key="2">
    <source>
        <dbReference type="PROSITE-ProRule" id="PRU00797"/>
    </source>
</evidence>
<proteinExistence type="inferred from homology"/>
<gene>
    <name type="primary">glmS</name>
</gene>